<reference key="1">
    <citation type="journal article" date="2006" name="Proc. Natl. Acad. Sci. U.S.A.">
        <title>Comparative genomics of the lactic acid bacteria.</title>
        <authorList>
            <person name="Makarova K.S."/>
            <person name="Slesarev A."/>
            <person name="Wolf Y.I."/>
            <person name="Sorokin A."/>
            <person name="Mirkin B."/>
            <person name="Koonin E.V."/>
            <person name="Pavlov A."/>
            <person name="Pavlova N."/>
            <person name="Karamychev V."/>
            <person name="Polouchine N."/>
            <person name="Shakhova V."/>
            <person name="Grigoriev I."/>
            <person name="Lou Y."/>
            <person name="Rohksar D."/>
            <person name="Lucas S."/>
            <person name="Huang K."/>
            <person name="Goodstein D.M."/>
            <person name="Hawkins T."/>
            <person name="Plengvidhya V."/>
            <person name="Welker D."/>
            <person name="Hughes J."/>
            <person name="Goh Y."/>
            <person name="Benson A."/>
            <person name="Baldwin K."/>
            <person name="Lee J.-H."/>
            <person name="Diaz-Muniz I."/>
            <person name="Dosti B."/>
            <person name="Smeianov V."/>
            <person name="Wechter W."/>
            <person name="Barabote R."/>
            <person name="Lorca G."/>
            <person name="Altermann E."/>
            <person name="Barrangou R."/>
            <person name="Ganesan B."/>
            <person name="Xie Y."/>
            <person name="Rawsthorne H."/>
            <person name="Tamir D."/>
            <person name="Parker C."/>
            <person name="Breidt F."/>
            <person name="Broadbent J.R."/>
            <person name="Hutkins R."/>
            <person name="O'Sullivan D."/>
            <person name="Steele J."/>
            <person name="Unlu G."/>
            <person name="Saier M.H. Jr."/>
            <person name="Klaenhammer T."/>
            <person name="Richardson P."/>
            <person name="Kozyavkin S."/>
            <person name="Weimer B.C."/>
            <person name="Mills D.A."/>
        </authorList>
    </citation>
    <scope>NUCLEOTIDE SEQUENCE [LARGE SCALE GENOMIC DNA]</scope>
    <source>
        <strain>ATCC 33323 / DSM 20243 / BCRC 14619 / CIP 102991 / JCM 1131 / KCTC 3163 / NCIMB 11718 / NCTC 13722 / AM63</strain>
    </source>
</reference>
<accession>Q046F1</accession>
<feature type="chain" id="PRO_1000126817" description="Large ribosomal subunit protein bL31B">
    <location>
        <begin position="1"/>
        <end position="83"/>
    </location>
</feature>
<protein>
    <recommendedName>
        <fullName evidence="1">Large ribosomal subunit protein bL31B</fullName>
    </recommendedName>
    <alternativeName>
        <fullName evidence="2">50S ribosomal protein L31 type B</fullName>
    </alternativeName>
</protein>
<sequence>MRKGIHPDYQEVVFMDSATGAKFVAGSTLKPEETIEFEGKTYPLVRVEISSDSHPFYTGKQKFAQADGRIEKFNKKYGISSKN</sequence>
<proteinExistence type="inferred from homology"/>
<comment type="subunit">
    <text evidence="1">Part of the 50S ribosomal subunit.</text>
</comment>
<comment type="similarity">
    <text evidence="1">Belongs to the bacterial ribosomal protein bL31 family. Type B subfamily.</text>
</comment>
<keyword id="KW-0687">Ribonucleoprotein</keyword>
<keyword id="KW-0689">Ribosomal protein</keyword>
<evidence type="ECO:0000255" key="1">
    <source>
        <dbReference type="HAMAP-Rule" id="MF_00502"/>
    </source>
</evidence>
<evidence type="ECO:0000305" key="2"/>
<dbReference type="EMBL" id="CP000413">
    <property type="protein sequence ID" value="ABJ59671.1"/>
    <property type="molecule type" value="Genomic_DNA"/>
</dbReference>
<dbReference type="RefSeq" id="WP_003647850.1">
    <property type="nucleotide sequence ID" value="NZ_WBMG01000001.1"/>
</dbReference>
<dbReference type="SMR" id="Q046F1"/>
<dbReference type="KEGG" id="lga:LGAS_0263"/>
<dbReference type="HOGENOM" id="CLU_114306_2_1_9"/>
<dbReference type="BioCyc" id="LGAS324831:G1G6Y-261-MONOMER"/>
<dbReference type="Proteomes" id="UP000000664">
    <property type="component" value="Chromosome"/>
</dbReference>
<dbReference type="GO" id="GO:1990904">
    <property type="term" value="C:ribonucleoprotein complex"/>
    <property type="evidence" value="ECO:0007669"/>
    <property type="project" value="UniProtKB-KW"/>
</dbReference>
<dbReference type="GO" id="GO:0005840">
    <property type="term" value="C:ribosome"/>
    <property type="evidence" value="ECO:0007669"/>
    <property type="project" value="UniProtKB-KW"/>
</dbReference>
<dbReference type="GO" id="GO:0003735">
    <property type="term" value="F:structural constituent of ribosome"/>
    <property type="evidence" value="ECO:0007669"/>
    <property type="project" value="InterPro"/>
</dbReference>
<dbReference type="GO" id="GO:0006412">
    <property type="term" value="P:translation"/>
    <property type="evidence" value="ECO:0007669"/>
    <property type="project" value="UniProtKB-UniRule"/>
</dbReference>
<dbReference type="Gene3D" id="4.10.830.30">
    <property type="entry name" value="Ribosomal protein L31"/>
    <property type="match status" value="1"/>
</dbReference>
<dbReference type="HAMAP" id="MF_00502">
    <property type="entry name" value="Ribosomal_bL31_2"/>
    <property type="match status" value="1"/>
</dbReference>
<dbReference type="InterPro" id="IPR034704">
    <property type="entry name" value="Ribosomal_bL28/bL31-like_sf"/>
</dbReference>
<dbReference type="InterPro" id="IPR002150">
    <property type="entry name" value="Ribosomal_bL31"/>
</dbReference>
<dbReference type="InterPro" id="IPR027493">
    <property type="entry name" value="Ribosomal_bL31_B"/>
</dbReference>
<dbReference type="InterPro" id="IPR042105">
    <property type="entry name" value="Ribosomal_bL31_sf"/>
</dbReference>
<dbReference type="NCBIfam" id="TIGR00105">
    <property type="entry name" value="L31"/>
    <property type="match status" value="1"/>
</dbReference>
<dbReference type="NCBIfam" id="NF002462">
    <property type="entry name" value="PRK01678.1"/>
    <property type="match status" value="1"/>
</dbReference>
<dbReference type="PANTHER" id="PTHR33280">
    <property type="entry name" value="50S RIBOSOMAL PROTEIN L31, CHLOROPLASTIC"/>
    <property type="match status" value="1"/>
</dbReference>
<dbReference type="PANTHER" id="PTHR33280:SF1">
    <property type="entry name" value="LARGE RIBOSOMAL SUBUNIT PROTEIN BL31C"/>
    <property type="match status" value="1"/>
</dbReference>
<dbReference type="Pfam" id="PF01197">
    <property type="entry name" value="Ribosomal_L31"/>
    <property type="match status" value="1"/>
</dbReference>
<dbReference type="PRINTS" id="PR01249">
    <property type="entry name" value="RIBOSOMALL31"/>
</dbReference>
<dbReference type="SUPFAM" id="SSF143800">
    <property type="entry name" value="L28p-like"/>
    <property type="match status" value="1"/>
</dbReference>
<dbReference type="PROSITE" id="PS01143">
    <property type="entry name" value="RIBOSOMAL_L31"/>
    <property type="match status" value="1"/>
</dbReference>
<name>RL31B_LACGA</name>
<organism>
    <name type="scientific">Lactobacillus gasseri (strain ATCC 33323 / DSM 20243 / BCRC 14619 / CIP 102991 / JCM 1131 / KCTC 3163 / NCIMB 11718 / NCTC 13722 / AM63)</name>
    <dbReference type="NCBI Taxonomy" id="324831"/>
    <lineage>
        <taxon>Bacteria</taxon>
        <taxon>Bacillati</taxon>
        <taxon>Bacillota</taxon>
        <taxon>Bacilli</taxon>
        <taxon>Lactobacillales</taxon>
        <taxon>Lactobacillaceae</taxon>
        <taxon>Lactobacillus</taxon>
    </lineage>
</organism>
<gene>
    <name evidence="1" type="primary">rpmE2</name>
    <name type="ordered locus">LGAS_0263</name>
</gene>